<sequence length="147" mass="16278">MVHFTAEEKAAITSLWGKMNVEEAGGESLGRLLVVYPWTQRFFDNFGNLSSPSAILGNPKVKAHGKKVLTSFGDAIKNMDNLKTTFAKLSELHCDKLHVDPENFRLLGNVMVIILATHFGKEFTPEVQAAWQKLVSAVAIALGHKYH</sequence>
<gene>
    <name type="primary">HBE1</name>
</gene>
<keyword id="KW-0349">Heme</keyword>
<keyword id="KW-0408">Iron</keyword>
<keyword id="KW-0479">Metal-binding</keyword>
<keyword id="KW-0561">Oxygen transport</keyword>
<keyword id="KW-0597">Phosphoprotein</keyword>
<keyword id="KW-0813">Transport</keyword>
<reference key="1">
    <citation type="journal article" date="1993" name="Mol. Phylogenet. Evol.">
        <title>Molecular phylogeny of the New World monkeys (Platyrrhini, primates).</title>
        <authorList>
            <person name="Schneider H."/>
            <person name="Schneider M.P.C."/>
            <person name="Sampaio I."/>
            <person name="Harada M.L."/>
            <person name="Stanhope M.J."/>
            <person name="Czekysbuaj J."/>
            <person name="Goodman M."/>
        </authorList>
    </citation>
    <scope>NUCLEOTIDE SEQUENCE [GENOMIC DNA]</scope>
    <source>
        <tissue>Lymphocyte</tissue>
    </source>
</reference>
<dbReference type="EMBL" id="L25357">
    <property type="protein sequence ID" value="AAA36827.1"/>
    <property type="molecule type" value="Genomic_DNA"/>
</dbReference>
<dbReference type="SMR" id="P51441"/>
<dbReference type="GO" id="GO:0072562">
    <property type="term" value="C:blood microparticle"/>
    <property type="evidence" value="ECO:0007669"/>
    <property type="project" value="TreeGrafter"/>
</dbReference>
<dbReference type="GO" id="GO:0031838">
    <property type="term" value="C:haptoglobin-hemoglobin complex"/>
    <property type="evidence" value="ECO:0007669"/>
    <property type="project" value="TreeGrafter"/>
</dbReference>
<dbReference type="GO" id="GO:0005833">
    <property type="term" value="C:hemoglobin complex"/>
    <property type="evidence" value="ECO:0007669"/>
    <property type="project" value="InterPro"/>
</dbReference>
<dbReference type="GO" id="GO:0031720">
    <property type="term" value="F:haptoglobin binding"/>
    <property type="evidence" value="ECO:0007669"/>
    <property type="project" value="TreeGrafter"/>
</dbReference>
<dbReference type="GO" id="GO:0020037">
    <property type="term" value="F:heme binding"/>
    <property type="evidence" value="ECO:0007669"/>
    <property type="project" value="InterPro"/>
</dbReference>
<dbReference type="GO" id="GO:0031721">
    <property type="term" value="F:hemoglobin alpha binding"/>
    <property type="evidence" value="ECO:0007669"/>
    <property type="project" value="TreeGrafter"/>
</dbReference>
<dbReference type="GO" id="GO:0046872">
    <property type="term" value="F:metal ion binding"/>
    <property type="evidence" value="ECO:0007669"/>
    <property type="project" value="UniProtKB-KW"/>
</dbReference>
<dbReference type="GO" id="GO:0043177">
    <property type="term" value="F:organic acid binding"/>
    <property type="evidence" value="ECO:0007669"/>
    <property type="project" value="TreeGrafter"/>
</dbReference>
<dbReference type="GO" id="GO:0019825">
    <property type="term" value="F:oxygen binding"/>
    <property type="evidence" value="ECO:0007669"/>
    <property type="project" value="InterPro"/>
</dbReference>
<dbReference type="GO" id="GO:0005344">
    <property type="term" value="F:oxygen carrier activity"/>
    <property type="evidence" value="ECO:0007669"/>
    <property type="project" value="UniProtKB-KW"/>
</dbReference>
<dbReference type="GO" id="GO:0004601">
    <property type="term" value="F:peroxidase activity"/>
    <property type="evidence" value="ECO:0007669"/>
    <property type="project" value="TreeGrafter"/>
</dbReference>
<dbReference type="GO" id="GO:0042744">
    <property type="term" value="P:hydrogen peroxide catabolic process"/>
    <property type="evidence" value="ECO:0007669"/>
    <property type="project" value="TreeGrafter"/>
</dbReference>
<dbReference type="CDD" id="cd08925">
    <property type="entry name" value="Hb-beta-like"/>
    <property type="match status" value="1"/>
</dbReference>
<dbReference type="FunFam" id="1.10.490.10:FF:000001">
    <property type="entry name" value="Hemoglobin subunit beta"/>
    <property type="match status" value="1"/>
</dbReference>
<dbReference type="Gene3D" id="1.10.490.10">
    <property type="entry name" value="Globins"/>
    <property type="match status" value="1"/>
</dbReference>
<dbReference type="InterPro" id="IPR000971">
    <property type="entry name" value="Globin"/>
</dbReference>
<dbReference type="InterPro" id="IPR009050">
    <property type="entry name" value="Globin-like_sf"/>
</dbReference>
<dbReference type="InterPro" id="IPR012292">
    <property type="entry name" value="Globin/Proto"/>
</dbReference>
<dbReference type="InterPro" id="IPR002337">
    <property type="entry name" value="Hemoglobin_b"/>
</dbReference>
<dbReference type="InterPro" id="IPR050056">
    <property type="entry name" value="Hemoglobin_oxygen_transport"/>
</dbReference>
<dbReference type="PANTHER" id="PTHR11442">
    <property type="entry name" value="HEMOGLOBIN FAMILY MEMBER"/>
    <property type="match status" value="1"/>
</dbReference>
<dbReference type="PANTHER" id="PTHR11442:SF7">
    <property type="entry name" value="HEMOGLOBIN SUBUNIT EPSILON"/>
    <property type="match status" value="1"/>
</dbReference>
<dbReference type="Pfam" id="PF00042">
    <property type="entry name" value="Globin"/>
    <property type="match status" value="1"/>
</dbReference>
<dbReference type="PRINTS" id="PR00814">
    <property type="entry name" value="BETAHAEM"/>
</dbReference>
<dbReference type="SUPFAM" id="SSF46458">
    <property type="entry name" value="Globin-like"/>
    <property type="match status" value="1"/>
</dbReference>
<dbReference type="PROSITE" id="PS01033">
    <property type="entry name" value="GLOBIN"/>
    <property type="match status" value="1"/>
</dbReference>
<comment type="function">
    <text>The epsilon chain is a beta-type chain of early mammalian embryonic hemoglobin.</text>
</comment>
<comment type="subunit">
    <text>Heterotetramer of two alpha chains and two epsilon chains in early embryonic hemoglobin Gower-2; two zeta chains and two epsilon chains in early embryonic hemoglobin Gower-1.</text>
</comment>
<comment type="tissue specificity">
    <text>Red blood cells.</text>
</comment>
<comment type="similarity">
    <text evidence="2">Belongs to the globin family.</text>
</comment>
<proteinExistence type="evidence at transcript level"/>
<organism>
    <name type="scientific">Leontopithecus rosalia</name>
    <name type="common">Golden lion tamarin</name>
    <dbReference type="NCBI Taxonomy" id="30588"/>
    <lineage>
        <taxon>Eukaryota</taxon>
        <taxon>Metazoa</taxon>
        <taxon>Chordata</taxon>
        <taxon>Craniata</taxon>
        <taxon>Vertebrata</taxon>
        <taxon>Euteleostomi</taxon>
        <taxon>Mammalia</taxon>
        <taxon>Eutheria</taxon>
        <taxon>Euarchontoglires</taxon>
        <taxon>Primates</taxon>
        <taxon>Haplorrhini</taxon>
        <taxon>Platyrrhini</taxon>
        <taxon>Cebidae</taxon>
        <taxon>Callitrichinae</taxon>
        <taxon>Leontopithecus</taxon>
    </lineage>
</organism>
<protein>
    <recommendedName>
        <fullName>Hemoglobin subunit epsilon</fullName>
    </recommendedName>
    <alternativeName>
        <fullName>Epsilon-globin</fullName>
    </alternativeName>
    <alternativeName>
        <fullName>Hemoglobin epsilon chain</fullName>
    </alternativeName>
</protein>
<feature type="chain" id="PRO_0000053215" description="Hemoglobin subunit epsilon">
    <location>
        <begin position="1"/>
        <end position="147"/>
    </location>
</feature>
<feature type="domain" description="Globin" evidence="2">
    <location>
        <begin position="3"/>
        <end position="147"/>
    </location>
</feature>
<feature type="binding site" description="distal binding residue" evidence="2">
    <location>
        <position position="64"/>
    </location>
    <ligand>
        <name>heme b</name>
        <dbReference type="ChEBI" id="CHEBI:60344"/>
    </ligand>
    <ligandPart>
        <name>Fe</name>
        <dbReference type="ChEBI" id="CHEBI:18248"/>
    </ligandPart>
</feature>
<feature type="binding site" description="proximal binding residue" evidence="2">
    <location>
        <position position="93"/>
    </location>
    <ligand>
        <name>heme b</name>
        <dbReference type="ChEBI" id="CHEBI:60344"/>
    </ligand>
    <ligandPart>
        <name>Fe</name>
        <dbReference type="ChEBI" id="CHEBI:18248"/>
    </ligandPart>
</feature>
<feature type="modified residue" description="Phosphoserine" evidence="1">
    <location>
        <position position="14"/>
    </location>
</feature>
<feature type="modified residue" description="Phosphoserine" evidence="1">
    <location>
        <position position="51"/>
    </location>
</feature>
<name>HBE_LEORO</name>
<evidence type="ECO:0000250" key="1">
    <source>
        <dbReference type="UniProtKB" id="P02100"/>
    </source>
</evidence>
<evidence type="ECO:0000255" key="2">
    <source>
        <dbReference type="PROSITE-ProRule" id="PRU00238"/>
    </source>
</evidence>
<accession>P51441</accession>